<gene>
    <name evidence="1" type="primary">psbL</name>
</gene>
<name>PSBL_OENPA</name>
<comment type="function">
    <text evidence="1">One of the components of the core complex of photosystem II (PSII). PSII is a light-driven water:plastoquinone oxidoreductase that uses light energy to abstract electrons from H(2)O, generating O(2) and a proton gradient subsequently used for ATP formation. It consists of a core antenna complex that captures photons, and an electron transfer chain that converts photonic excitation into a charge separation. This subunit is found at the monomer-monomer interface and is required for correct PSII assembly and/or dimerization.</text>
</comment>
<comment type="subunit">
    <text evidence="1">PSII is composed of 1 copy each of membrane proteins PsbA, PsbB, PsbC, PsbD, PsbE, PsbF, PsbH, PsbI, PsbJ, PsbK, PsbL, PsbM, PsbT, PsbX, PsbY, PsbZ, Psb30/Ycf12, at least 3 peripheral proteins of the oxygen-evolving complex and a large number of cofactors. It forms dimeric complexes.</text>
</comment>
<comment type="subcellular location">
    <subcellularLocation>
        <location evidence="1">Plastid</location>
        <location evidence="1">Chloroplast thylakoid membrane</location>
        <topology evidence="1">Single-pass membrane protein</topology>
    </subcellularLocation>
</comment>
<comment type="similarity">
    <text evidence="1">Belongs to the PsbL family.</text>
</comment>
<protein>
    <recommendedName>
        <fullName evidence="1">Photosystem II reaction center protein L</fullName>
        <shortName evidence="1">PSII-L</shortName>
    </recommendedName>
</protein>
<geneLocation type="chloroplast"/>
<feature type="chain" id="PRO_0000353267" description="Photosystem II reaction center protein L">
    <location>
        <begin position="1"/>
        <end position="38"/>
    </location>
</feature>
<feature type="transmembrane region" description="Helical" evidence="1">
    <location>
        <begin position="17"/>
        <end position="37"/>
    </location>
</feature>
<proteinExistence type="inferred from homology"/>
<accession>B0Z5E3</accession>
<sequence>MTQSNPNEQDVELNRTSLYWGLLLIFVLAVLFSNYFFN</sequence>
<organism>
    <name type="scientific">Oenothera parviflora</name>
    <name type="common">Small-flowered evening primrose</name>
    <name type="synonym">Oenothera cruciata</name>
    <dbReference type="NCBI Taxonomy" id="482429"/>
    <lineage>
        <taxon>Eukaryota</taxon>
        <taxon>Viridiplantae</taxon>
        <taxon>Streptophyta</taxon>
        <taxon>Embryophyta</taxon>
        <taxon>Tracheophyta</taxon>
        <taxon>Spermatophyta</taxon>
        <taxon>Magnoliopsida</taxon>
        <taxon>eudicotyledons</taxon>
        <taxon>Gunneridae</taxon>
        <taxon>Pentapetalae</taxon>
        <taxon>rosids</taxon>
        <taxon>malvids</taxon>
        <taxon>Myrtales</taxon>
        <taxon>Onagraceae</taxon>
        <taxon>Onagroideae</taxon>
        <taxon>Onagreae</taxon>
        <taxon>Oenothera</taxon>
    </lineage>
</organism>
<keyword id="KW-0150">Chloroplast</keyword>
<keyword id="KW-0472">Membrane</keyword>
<keyword id="KW-0602">Photosynthesis</keyword>
<keyword id="KW-0604">Photosystem II</keyword>
<keyword id="KW-0934">Plastid</keyword>
<keyword id="KW-0674">Reaction center</keyword>
<keyword id="KW-0793">Thylakoid</keyword>
<keyword id="KW-0812">Transmembrane</keyword>
<keyword id="KW-1133">Transmembrane helix</keyword>
<reference key="1">
    <citation type="journal article" date="2008" name="Nucleic Acids Res.">
        <title>The complete nucleotide sequences of the five genetically distinct plastid genomes of Oenothera, subsection Oenothera: I. Sequence evaluation and plastome evolution.</title>
        <authorList>
            <person name="Greiner S."/>
            <person name="Wang X."/>
            <person name="Rauwolf U."/>
            <person name="Silber M.V."/>
            <person name="Mayer K."/>
            <person name="Meurer J."/>
            <person name="Haberer G."/>
            <person name="Herrmann R.G."/>
        </authorList>
    </citation>
    <scope>NUCLEOTIDE SEQUENCE [LARGE SCALE GENOMIC DNA]</scope>
    <source>
        <strain>cv. Atrovirens</strain>
    </source>
</reference>
<dbReference type="EMBL" id="EU262891">
    <property type="protein sequence ID" value="ABX10136.1"/>
    <property type="molecule type" value="Genomic_DNA"/>
</dbReference>
<dbReference type="RefSeq" id="YP_001687466.1">
    <property type="nucleotide sequence ID" value="NC_010362.1"/>
</dbReference>
<dbReference type="SMR" id="B0Z5E3"/>
<dbReference type="GeneID" id="5955419"/>
<dbReference type="GO" id="GO:0009535">
    <property type="term" value="C:chloroplast thylakoid membrane"/>
    <property type="evidence" value="ECO:0007669"/>
    <property type="project" value="UniProtKB-SubCell"/>
</dbReference>
<dbReference type="GO" id="GO:0009539">
    <property type="term" value="C:photosystem II reaction center"/>
    <property type="evidence" value="ECO:0007669"/>
    <property type="project" value="InterPro"/>
</dbReference>
<dbReference type="GO" id="GO:0015979">
    <property type="term" value="P:photosynthesis"/>
    <property type="evidence" value="ECO:0007669"/>
    <property type="project" value="UniProtKB-UniRule"/>
</dbReference>
<dbReference type="HAMAP" id="MF_01317">
    <property type="entry name" value="PSII_PsbL"/>
    <property type="match status" value="1"/>
</dbReference>
<dbReference type="InterPro" id="IPR003372">
    <property type="entry name" value="PSII_PsbL"/>
</dbReference>
<dbReference type="InterPro" id="IPR037266">
    <property type="entry name" value="PSII_PsbL_sf"/>
</dbReference>
<dbReference type="NCBIfam" id="NF001972">
    <property type="entry name" value="PRK00753.1"/>
    <property type="match status" value="1"/>
</dbReference>
<dbReference type="Pfam" id="PF02419">
    <property type="entry name" value="PsbL"/>
    <property type="match status" value="1"/>
</dbReference>
<dbReference type="SUPFAM" id="SSF161017">
    <property type="entry name" value="Photosystem II reaction center protein L, PsbL"/>
    <property type="match status" value="1"/>
</dbReference>
<evidence type="ECO:0000255" key="1">
    <source>
        <dbReference type="HAMAP-Rule" id="MF_01317"/>
    </source>
</evidence>